<comment type="function">
    <text>Destroys radicals which are normally produced within the cells and which are toxic to biological systems.</text>
</comment>
<comment type="catalytic activity">
    <reaction>
        <text>2 superoxide + 2 H(+) = H2O2 + O2</text>
        <dbReference type="Rhea" id="RHEA:20696"/>
        <dbReference type="ChEBI" id="CHEBI:15378"/>
        <dbReference type="ChEBI" id="CHEBI:15379"/>
        <dbReference type="ChEBI" id="CHEBI:16240"/>
        <dbReference type="ChEBI" id="CHEBI:18421"/>
        <dbReference type="EC" id="1.15.1.1"/>
    </reaction>
</comment>
<comment type="cofactor">
    <cofactor evidence="1">
        <name>Cu cation</name>
        <dbReference type="ChEBI" id="CHEBI:23378"/>
    </cofactor>
    <text evidence="1">Binds 1 copper ion per subunit.</text>
</comment>
<comment type="cofactor">
    <cofactor evidence="1">
        <name>Zn(2+)</name>
        <dbReference type="ChEBI" id="CHEBI:29105"/>
    </cofactor>
    <text evidence="1">Binds 1 zinc ion per subunit.</text>
</comment>
<comment type="subunit">
    <text>Homodimer.</text>
</comment>
<comment type="subcellular location">
    <subcellularLocation>
        <location>Cytoplasm</location>
    </subcellularLocation>
</comment>
<comment type="tissue specificity">
    <text>Dominant isozyme in roots.</text>
</comment>
<comment type="similarity">
    <text evidence="3">Belongs to the Cu-Zn superoxide dismutase family.</text>
</comment>
<evidence type="ECO:0000250" key="1"/>
<evidence type="ECO:0000269" key="2">
    <source>
    </source>
</evidence>
<evidence type="ECO:0000305" key="3"/>
<sequence>MSPLKAVAVLTGADVKGVVQFT</sequence>
<proteinExistence type="evidence at protein level"/>
<reference key="1">
    <citation type="journal article" date="1992" name="Plant Physiol.">
        <title>Purification of two superoxide dismutase isozymes and their subcellular localization in needles and roots of Norway spruce (Picea abies L.) trees.</title>
        <authorList>
            <person name="Kroeniger W."/>
            <person name="Rennenberg H."/>
            <person name="Polle A."/>
        </authorList>
    </citation>
    <scope>PROTEIN SEQUENCE OF 2-22</scope>
    <source>
        <tissue>Needle</tissue>
    </source>
</reference>
<organism>
    <name type="scientific">Picea abies</name>
    <name type="common">Norway spruce</name>
    <name type="synonym">Picea excelsa</name>
    <dbReference type="NCBI Taxonomy" id="3329"/>
    <lineage>
        <taxon>Eukaryota</taxon>
        <taxon>Viridiplantae</taxon>
        <taxon>Streptophyta</taxon>
        <taxon>Embryophyta</taxon>
        <taxon>Tracheophyta</taxon>
        <taxon>Spermatophyta</taxon>
        <taxon>Pinopsida</taxon>
        <taxon>Pinidae</taxon>
        <taxon>Conifers I</taxon>
        <taxon>Pinales</taxon>
        <taxon>Pinaceae</taxon>
        <taxon>Picea</taxon>
    </lineage>
</organism>
<protein>
    <recommendedName>
        <fullName>Superoxide dismutase [Cu-Zn] 2</fullName>
        <ecNumber>1.15.1.1</ecNumber>
    </recommendedName>
    <alternativeName>
        <fullName>Superoxide dismutase [Cu-Zn] II</fullName>
        <shortName>SOD II</shortName>
    </alternativeName>
</protein>
<keyword id="KW-0049">Antioxidant</keyword>
<keyword id="KW-0186">Copper</keyword>
<keyword id="KW-0963">Cytoplasm</keyword>
<keyword id="KW-0903">Direct protein sequencing</keyword>
<keyword id="KW-0479">Metal-binding</keyword>
<keyword id="KW-0560">Oxidoreductase</keyword>
<keyword id="KW-0862">Zinc</keyword>
<accession>P29428</accession>
<feature type="initiator methionine" description="Removed" evidence="2">
    <location>
        <position position="1"/>
    </location>
</feature>
<feature type="chain" id="PRO_0000164153" description="Superoxide dismutase [Cu-Zn] 2">
    <location>
        <begin position="2"/>
        <end position="22" status="greater than"/>
    </location>
</feature>
<feature type="non-terminal residue">
    <location>
        <position position="22"/>
    </location>
</feature>
<name>SODC2_PICAB</name>
<dbReference type="EC" id="1.15.1.1"/>
<dbReference type="GO" id="GO:0005737">
    <property type="term" value="C:cytoplasm"/>
    <property type="evidence" value="ECO:0007669"/>
    <property type="project" value="UniProtKB-SubCell"/>
</dbReference>
<dbReference type="GO" id="GO:0046872">
    <property type="term" value="F:metal ion binding"/>
    <property type="evidence" value="ECO:0007669"/>
    <property type="project" value="UniProtKB-KW"/>
</dbReference>
<dbReference type="GO" id="GO:0004784">
    <property type="term" value="F:superoxide dismutase activity"/>
    <property type="evidence" value="ECO:0007669"/>
    <property type="project" value="UniProtKB-EC"/>
</dbReference>